<name>SYT_THEVO</name>
<evidence type="ECO:0000255" key="1">
    <source>
        <dbReference type="HAMAP-Rule" id="MF_00184"/>
    </source>
</evidence>
<evidence type="ECO:0000255" key="2">
    <source>
        <dbReference type="PROSITE-ProRule" id="PRU01228"/>
    </source>
</evidence>
<proteinExistence type="inferred from homology"/>
<keyword id="KW-0030">Aminoacyl-tRNA synthetase</keyword>
<keyword id="KW-0067">ATP-binding</keyword>
<keyword id="KW-0963">Cytoplasm</keyword>
<keyword id="KW-0436">Ligase</keyword>
<keyword id="KW-0479">Metal-binding</keyword>
<keyword id="KW-0547">Nucleotide-binding</keyword>
<keyword id="KW-0648">Protein biosynthesis</keyword>
<keyword id="KW-0694">RNA-binding</keyword>
<keyword id="KW-0820">tRNA-binding</keyword>
<keyword id="KW-0862">Zinc</keyword>
<gene>
    <name evidence="1" type="primary">thrS</name>
    <name type="ordered locus">TV1305</name>
    <name type="ORF">TVG1345067</name>
</gene>
<reference key="1">
    <citation type="journal article" date="2000" name="Proc. Natl. Acad. Sci. U.S.A.">
        <title>Archaeal adaptation to higher temperatures revealed by genomic sequence of Thermoplasma volcanium.</title>
        <authorList>
            <person name="Kawashima T."/>
            <person name="Amano N."/>
            <person name="Koike H."/>
            <person name="Makino S."/>
            <person name="Higuchi S."/>
            <person name="Kawashima-Ohya Y."/>
            <person name="Watanabe K."/>
            <person name="Yamazaki M."/>
            <person name="Kanehori K."/>
            <person name="Kawamoto T."/>
            <person name="Nunoshiba T."/>
            <person name="Yamamoto Y."/>
            <person name="Aramaki H."/>
            <person name="Makino K."/>
            <person name="Suzuki M."/>
        </authorList>
    </citation>
    <scope>NUCLEOTIDE SEQUENCE [LARGE SCALE GENOMIC DNA]</scope>
    <source>
        <strain>ATCC 51530 / DSM 4299 / JCM 9571 / NBRC 15438 / GSS1</strain>
    </source>
</reference>
<organism>
    <name type="scientific">Thermoplasma volcanium (strain ATCC 51530 / DSM 4299 / JCM 9571 / NBRC 15438 / GSS1)</name>
    <dbReference type="NCBI Taxonomy" id="273116"/>
    <lineage>
        <taxon>Archaea</taxon>
        <taxon>Methanobacteriati</taxon>
        <taxon>Thermoplasmatota</taxon>
        <taxon>Thermoplasmata</taxon>
        <taxon>Thermoplasmatales</taxon>
        <taxon>Thermoplasmataceae</taxon>
        <taxon>Thermoplasma</taxon>
    </lineage>
</organism>
<sequence>MPINEIRVQKGQRYRDAINDKKVIAVKKGDKFLDLDEIAGEDEAVQPVYLDSEDGLYILRHSAAHLLANAVTNLFPEALPNTGPVVENGFYYDFDMKPITEEDLSKIEEEMKRIVKENVPIRRMIYSKDELLKIFSKNPYKIRIINENVEGKSSVYQQGNFVDLCLGPHVPSTGYIKAFKLLSIASAVYKYDESKNLVRIYGTAFPDEKSLRRYLENLEEAKKRDHRKIIAEMDLAVFNSEWAPGFPMYTPNGQIIRKELIKYMDYVNGKNGWTDVWTPHVFKDTIWKQSGHYAKYKPNMYLFVLPDGDSYGIKPMNCPGHIAIFARRKYSYRDLPVKYSEPGTVYRYEKSGEVGGLTRPRAFTQDDGHEFIRMDQIVGEIKTLLGMVRETFTTVFGNIEMAFDLSVIDKEHPENYLLSYVCKDCGNRVEGLRGTDIECPVCHSHNMDPDFSTWDNATEQLRQAMDSMGITYKEYPGEAAFYGPKIDVHVKDALGRMWQLSTIQVDFFMPINFGLTYTNSEGKEERVVIIHRAIYGSYERFMAILLEHFAGKLPTWLTPIQTYVIPVGTANAEYARKVNKSLLDAGIRSVVDDGPDTVSKKIKMIHDQRPSYIVVVGAKEEQDNTVTVRNRAGKSKTYGMNEFLEIIKNEIEKRSVGQAF</sequence>
<feature type="chain" id="PRO_0000101116" description="Threonine--tRNA ligase">
    <location>
        <begin position="1"/>
        <end position="660"/>
    </location>
</feature>
<feature type="domain" description="TGS" evidence="2">
    <location>
        <begin position="1"/>
        <end position="49"/>
    </location>
</feature>
<feature type="region of interest" description="Catalytic" evidence="1">
    <location>
        <begin position="225"/>
        <end position="554"/>
    </location>
</feature>
<feature type="binding site" evidence="1">
    <location>
        <position position="318"/>
    </location>
    <ligand>
        <name>Zn(2+)</name>
        <dbReference type="ChEBI" id="CHEBI:29105"/>
    </ligand>
</feature>
<feature type="binding site" evidence="1">
    <location>
        <position position="369"/>
    </location>
    <ligand>
        <name>Zn(2+)</name>
        <dbReference type="ChEBI" id="CHEBI:29105"/>
    </ligand>
</feature>
<feature type="binding site" evidence="1">
    <location>
        <position position="531"/>
    </location>
    <ligand>
        <name>Zn(2+)</name>
        <dbReference type="ChEBI" id="CHEBI:29105"/>
    </ligand>
</feature>
<accession>Q978W0</accession>
<protein>
    <recommendedName>
        <fullName evidence="1">Threonine--tRNA ligase</fullName>
        <ecNumber evidence="1">6.1.1.3</ecNumber>
    </recommendedName>
    <alternativeName>
        <fullName evidence="1">Threonyl-tRNA synthetase</fullName>
        <shortName evidence="1">ThrRS</shortName>
    </alternativeName>
</protein>
<dbReference type="EC" id="6.1.1.3" evidence="1"/>
<dbReference type="EMBL" id="BA000011">
    <property type="protein sequence ID" value="BAB60447.1"/>
    <property type="molecule type" value="Genomic_DNA"/>
</dbReference>
<dbReference type="RefSeq" id="WP_010917540.1">
    <property type="nucleotide sequence ID" value="NC_002689.2"/>
</dbReference>
<dbReference type="SMR" id="Q978W0"/>
<dbReference type="STRING" id="273116.gene:9382112"/>
<dbReference type="PaxDb" id="273116-14325544"/>
<dbReference type="GeneID" id="1441422"/>
<dbReference type="KEGG" id="tvo:TVG1345067"/>
<dbReference type="eggNOG" id="arCOG00401">
    <property type="taxonomic scope" value="Archaea"/>
</dbReference>
<dbReference type="HOGENOM" id="CLU_008554_0_1_2"/>
<dbReference type="OrthoDB" id="372136at2157"/>
<dbReference type="PhylomeDB" id="Q978W0"/>
<dbReference type="Proteomes" id="UP000001017">
    <property type="component" value="Chromosome"/>
</dbReference>
<dbReference type="GO" id="GO:0005737">
    <property type="term" value="C:cytoplasm"/>
    <property type="evidence" value="ECO:0007669"/>
    <property type="project" value="UniProtKB-SubCell"/>
</dbReference>
<dbReference type="GO" id="GO:0002161">
    <property type="term" value="F:aminoacyl-tRNA deacylase activity"/>
    <property type="evidence" value="ECO:0007669"/>
    <property type="project" value="UniProtKB-ARBA"/>
</dbReference>
<dbReference type="GO" id="GO:0005524">
    <property type="term" value="F:ATP binding"/>
    <property type="evidence" value="ECO:0007669"/>
    <property type="project" value="UniProtKB-UniRule"/>
</dbReference>
<dbReference type="GO" id="GO:0046872">
    <property type="term" value="F:metal ion binding"/>
    <property type="evidence" value="ECO:0007669"/>
    <property type="project" value="UniProtKB-KW"/>
</dbReference>
<dbReference type="GO" id="GO:0004829">
    <property type="term" value="F:threonine-tRNA ligase activity"/>
    <property type="evidence" value="ECO:0007669"/>
    <property type="project" value="UniProtKB-UniRule"/>
</dbReference>
<dbReference type="GO" id="GO:0000049">
    <property type="term" value="F:tRNA binding"/>
    <property type="evidence" value="ECO:0007669"/>
    <property type="project" value="UniProtKB-KW"/>
</dbReference>
<dbReference type="GO" id="GO:0006435">
    <property type="term" value="P:threonyl-tRNA aminoacylation"/>
    <property type="evidence" value="ECO:0007669"/>
    <property type="project" value="UniProtKB-UniRule"/>
</dbReference>
<dbReference type="CDD" id="cd00860">
    <property type="entry name" value="ThrRS_anticodon"/>
    <property type="match status" value="1"/>
</dbReference>
<dbReference type="CDD" id="cd00771">
    <property type="entry name" value="ThrRS_core"/>
    <property type="match status" value="1"/>
</dbReference>
<dbReference type="FunFam" id="3.30.930.10:FF:000002">
    <property type="entry name" value="Threonine--tRNA ligase"/>
    <property type="match status" value="2"/>
</dbReference>
<dbReference type="FunFam" id="3.30.980.10:FF:000005">
    <property type="entry name" value="Threonyl-tRNA synthetase, mitochondrial"/>
    <property type="match status" value="1"/>
</dbReference>
<dbReference type="Gene3D" id="3.30.54.20">
    <property type="match status" value="1"/>
</dbReference>
<dbReference type="Gene3D" id="3.40.50.800">
    <property type="entry name" value="Anticodon-binding domain"/>
    <property type="match status" value="1"/>
</dbReference>
<dbReference type="Gene3D" id="3.30.930.10">
    <property type="entry name" value="Bira Bifunctional Protein, Domain 2"/>
    <property type="match status" value="2"/>
</dbReference>
<dbReference type="Gene3D" id="3.30.980.10">
    <property type="entry name" value="Threonyl-trna Synthetase, Chain A, domain 2"/>
    <property type="match status" value="1"/>
</dbReference>
<dbReference type="HAMAP" id="MF_00184">
    <property type="entry name" value="Thr_tRNA_synth"/>
    <property type="match status" value="1"/>
</dbReference>
<dbReference type="InterPro" id="IPR002314">
    <property type="entry name" value="aa-tRNA-synt_IIb"/>
</dbReference>
<dbReference type="InterPro" id="IPR006195">
    <property type="entry name" value="aa-tRNA-synth_II"/>
</dbReference>
<dbReference type="InterPro" id="IPR045864">
    <property type="entry name" value="aa-tRNA-synth_II/BPL/LPL"/>
</dbReference>
<dbReference type="InterPro" id="IPR004154">
    <property type="entry name" value="Anticodon-bd"/>
</dbReference>
<dbReference type="InterPro" id="IPR036621">
    <property type="entry name" value="Anticodon-bd_dom_sf"/>
</dbReference>
<dbReference type="InterPro" id="IPR004095">
    <property type="entry name" value="TGS"/>
</dbReference>
<dbReference type="InterPro" id="IPR002320">
    <property type="entry name" value="Thr-tRNA-ligase_IIa"/>
</dbReference>
<dbReference type="InterPro" id="IPR018163">
    <property type="entry name" value="Thr/Ala-tRNA-synth_IIc_edit"/>
</dbReference>
<dbReference type="InterPro" id="IPR047246">
    <property type="entry name" value="ThrRS_anticodon"/>
</dbReference>
<dbReference type="InterPro" id="IPR033728">
    <property type="entry name" value="ThrRS_core"/>
</dbReference>
<dbReference type="InterPro" id="IPR012947">
    <property type="entry name" value="tRNA_SAD"/>
</dbReference>
<dbReference type="PANTHER" id="PTHR11451:SF44">
    <property type="entry name" value="THREONINE--TRNA LIGASE, CHLOROPLASTIC_MITOCHONDRIAL 2"/>
    <property type="match status" value="1"/>
</dbReference>
<dbReference type="PANTHER" id="PTHR11451">
    <property type="entry name" value="THREONINE-TRNA LIGASE"/>
    <property type="match status" value="1"/>
</dbReference>
<dbReference type="Pfam" id="PF03129">
    <property type="entry name" value="HGTP_anticodon"/>
    <property type="match status" value="1"/>
</dbReference>
<dbReference type="Pfam" id="PF00587">
    <property type="entry name" value="tRNA-synt_2b"/>
    <property type="match status" value="1"/>
</dbReference>
<dbReference type="Pfam" id="PF07973">
    <property type="entry name" value="tRNA_SAD"/>
    <property type="match status" value="1"/>
</dbReference>
<dbReference type="PRINTS" id="PR01047">
    <property type="entry name" value="TRNASYNTHTHR"/>
</dbReference>
<dbReference type="SMART" id="SM00863">
    <property type="entry name" value="tRNA_SAD"/>
    <property type="match status" value="1"/>
</dbReference>
<dbReference type="SUPFAM" id="SSF52954">
    <property type="entry name" value="Class II aaRS ABD-related"/>
    <property type="match status" value="1"/>
</dbReference>
<dbReference type="SUPFAM" id="SSF55681">
    <property type="entry name" value="Class II aaRS and biotin synthetases"/>
    <property type="match status" value="1"/>
</dbReference>
<dbReference type="SUPFAM" id="SSF55186">
    <property type="entry name" value="ThrRS/AlaRS common domain"/>
    <property type="match status" value="1"/>
</dbReference>
<dbReference type="PROSITE" id="PS50862">
    <property type="entry name" value="AA_TRNA_LIGASE_II"/>
    <property type="match status" value="1"/>
</dbReference>
<dbReference type="PROSITE" id="PS51880">
    <property type="entry name" value="TGS"/>
    <property type="match status" value="1"/>
</dbReference>
<comment type="function">
    <text evidence="1">Catalyzes the attachment of threonine to tRNA(Thr) in a two-step reaction: L-threonine is first activated by ATP to form Thr-AMP and then transferred to the acceptor end of tRNA(Thr).</text>
</comment>
<comment type="catalytic activity">
    <reaction evidence="1">
        <text>tRNA(Thr) + L-threonine + ATP = L-threonyl-tRNA(Thr) + AMP + diphosphate + H(+)</text>
        <dbReference type="Rhea" id="RHEA:24624"/>
        <dbReference type="Rhea" id="RHEA-COMP:9670"/>
        <dbReference type="Rhea" id="RHEA-COMP:9704"/>
        <dbReference type="ChEBI" id="CHEBI:15378"/>
        <dbReference type="ChEBI" id="CHEBI:30616"/>
        <dbReference type="ChEBI" id="CHEBI:33019"/>
        <dbReference type="ChEBI" id="CHEBI:57926"/>
        <dbReference type="ChEBI" id="CHEBI:78442"/>
        <dbReference type="ChEBI" id="CHEBI:78534"/>
        <dbReference type="ChEBI" id="CHEBI:456215"/>
        <dbReference type="EC" id="6.1.1.3"/>
    </reaction>
</comment>
<comment type="cofactor">
    <cofactor evidence="1">
        <name>Zn(2+)</name>
        <dbReference type="ChEBI" id="CHEBI:29105"/>
    </cofactor>
    <text evidence="1">Binds 1 zinc ion per subunit.</text>
</comment>
<comment type="subunit">
    <text evidence="1">Homodimer.</text>
</comment>
<comment type="subcellular location">
    <subcellularLocation>
        <location evidence="1">Cytoplasm</location>
    </subcellularLocation>
</comment>
<comment type="similarity">
    <text evidence="1">Belongs to the class-II aminoacyl-tRNA synthetase family.</text>
</comment>